<sequence length="79" mass="9730">MALSGLQRQVIHFYRRCLHAAKAKEQPYNERWMAFVHQEFRKNQTISKRDFFYIEHLLRVGQRQYEAYSRPEVKDIHFS</sequence>
<reference key="1">
    <citation type="journal article" date="2002" name="Nature">
        <title>The genome sequence of Schizosaccharomyces pombe.</title>
        <authorList>
            <person name="Wood V."/>
            <person name="Gwilliam R."/>
            <person name="Rajandream M.A."/>
            <person name="Lyne M.H."/>
            <person name="Lyne R."/>
            <person name="Stewart A."/>
            <person name="Sgouros J.G."/>
            <person name="Peat N."/>
            <person name="Hayles J."/>
            <person name="Baker S.G."/>
            <person name="Basham D."/>
            <person name="Bowman S."/>
            <person name="Brooks K."/>
            <person name="Brown D."/>
            <person name="Brown S."/>
            <person name="Chillingworth T."/>
            <person name="Churcher C.M."/>
            <person name="Collins M."/>
            <person name="Connor R."/>
            <person name="Cronin A."/>
            <person name="Davis P."/>
            <person name="Feltwell T."/>
            <person name="Fraser A."/>
            <person name="Gentles S."/>
            <person name="Goble A."/>
            <person name="Hamlin N."/>
            <person name="Harris D.E."/>
            <person name="Hidalgo J."/>
            <person name="Hodgson G."/>
            <person name="Holroyd S."/>
            <person name="Hornsby T."/>
            <person name="Howarth S."/>
            <person name="Huckle E.J."/>
            <person name="Hunt S."/>
            <person name="Jagels K."/>
            <person name="James K.D."/>
            <person name="Jones L."/>
            <person name="Jones M."/>
            <person name="Leather S."/>
            <person name="McDonald S."/>
            <person name="McLean J."/>
            <person name="Mooney P."/>
            <person name="Moule S."/>
            <person name="Mungall K.L."/>
            <person name="Murphy L.D."/>
            <person name="Niblett D."/>
            <person name="Odell C."/>
            <person name="Oliver K."/>
            <person name="O'Neil S."/>
            <person name="Pearson D."/>
            <person name="Quail M.A."/>
            <person name="Rabbinowitsch E."/>
            <person name="Rutherford K.M."/>
            <person name="Rutter S."/>
            <person name="Saunders D."/>
            <person name="Seeger K."/>
            <person name="Sharp S."/>
            <person name="Skelton J."/>
            <person name="Simmonds M.N."/>
            <person name="Squares R."/>
            <person name="Squares S."/>
            <person name="Stevens K."/>
            <person name="Taylor K."/>
            <person name="Taylor R.G."/>
            <person name="Tivey A."/>
            <person name="Walsh S.V."/>
            <person name="Warren T."/>
            <person name="Whitehead S."/>
            <person name="Woodward J.R."/>
            <person name="Volckaert G."/>
            <person name="Aert R."/>
            <person name="Robben J."/>
            <person name="Grymonprez B."/>
            <person name="Weltjens I."/>
            <person name="Vanstreels E."/>
            <person name="Rieger M."/>
            <person name="Schaefer M."/>
            <person name="Mueller-Auer S."/>
            <person name="Gabel C."/>
            <person name="Fuchs M."/>
            <person name="Duesterhoeft A."/>
            <person name="Fritzc C."/>
            <person name="Holzer E."/>
            <person name="Moestl D."/>
            <person name="Hilbert H."/>
            <person name="Borzym K."/>
            <person name="Langer I."/>
            <person name="Beck A."/>
            <person name="Lehrach H."/>
            <person name="Reinhardt R."/>
            <person name="Pohl T.M."/>
            <person name="Eger P."/>
            <person name="Zimmermann W."/>
            <person name="Wedler H."/>
            <person name="Wambutt R."/>
            <person name="Purnelle B."/>
            <person name="Goffeau A."/>
            <person name="Cadieu E."/>
            <person name="Dreano S."/>
            <person name="Gloux S."/>
            <person name="Lelaure V."/>
            <person name="Mottier S."/>
            <person name="Galibert F."/>
            <person name="Aves S.J."/>
            <person name="Xiang Z."/>
            <person name="Hunt C."/>
            <person name="Moore K."/>
            <person name="Hurst S.M."/>
            <person name="Lucas M."/>
            <person name="Rochet M."/>
            <person name="Gaillardin C."/>
            <person name="Tallada V.A."/>
            <person name="Garzon A."/>
            <person name="Thode G."/>
            <person name="Daga R.R."/>
            <person name="Cruzado L."/>
            <person name="Jimenez J."/>
            <person name="Sanchez M."/>
            <person name="del Rey F."/>
            <person name="Benito J."/>
            <person name="Dominguez A."/>
            <person name="Revuelta J.L."/>
            <person name="Moreno S."/>
            <person name="Armstrong J."/>
            <person name="Forsburg S.L."/>
            <person name="Cerutti L."/>
            <person name="Lowe T."/>
            <person name="McCombie W.R."/>
            <person name="Paulsen I."/>
            <person name="Potashkin J."/>
            <person name="Shpakovski G.V."/>
            <person name="Ussery D."/>
            <person name="Barrell B.G."/>
            <person name="Nurse P."/>
        </authorList>
    </citation>
    <scope>NUCLEOTIDE SEQUENCE [LARGE SCALE GENOMIC DNA]</scope>
    <source>
        <strain>972 / ATCC 24843</strain>
    </source>
</reference>
<reference key="2">
    <citation type="journal article" date="2006" name="Nat. Biotechnol.">
        <title>ORFeome cloning and global analysis of protein localization in the fission yeast Schizosaccharomyces pombe.</title>
        <authorList>
            <person name="Matsuyama A."/>
            <person name="Arai R."/>
            <person name="Yashiroda Y."/>
            <person name="Shirai A."/>
            <person name="Kamata A."/>
            <person name="Sekido S."/>
            <person name="Kobayashi Y."/>
            <person name="Hashimoto A."/>
            <person name="Hamamoto M."/>
            <person name="Hiraoka Y."/>
            <person name="Horinouchi S."/>
            <person name="Yoshida M."/>
        </authorList>
    </citation>
    <scope>SUBCELLULAR LOCATION [LARGE SCALE ANALYSIS]</scope>
</reference>
<dbReference type="EMBL" id="CU329670">
    <property type="protein sequence ID" value="CAB65813.1"/>
    <property type="molecule type" value="Genomic_DNA"/>
</dbReference>
<dbReference type="PIR" id="T50242">
    <property type="entry name" value="T50242"/>
</dbReference>
<dbReference type="SMR" id="Q9US02"/>
<dbReference type="FunCoup" id="Q9US02">
    <property type="interactions" value="198"/>
</dbReference>
<dbReference type="STRING" id="284812.Q9US02"/>
<dbReference type="PaxDb" id="4896-SPAC664.12c.1"/>
<dbReference type="EnsemblFungi" id="SPAC664.12c.1">
    <property type="protein sequence ID" value="SPAC664.12c.1:pep"/>
    <property type="gene ID" value="SPAC664.12c"/>
</dbReference>
<dbReference type="KEGG" id="spo:2543362"/>
<dbReference type="PomBase" id="SPAC664.12c"/>
<dbReference type="VEuPathDB" id="FungiDB:SPAC664.12c"/>
<dbReference type="eggNOG" id="KOG4620">
    <property type="taxonomic scope" value="Eukaryota"/>
</dbReference>
<dbReference type="HOGENOM" id="CLU_154777_1_1_1"/>
<dbReference type="InParanoid" id="Q9US02"/>
<dbReference type="OMA" id="FFYIEHL"/>
<dbReference type="PhylomeDB" id="Q9US02"/>
<dbReference type="PRO" id="PR:Q9US02"/>
<dbReference type="Proteomes" id="UP000002485">
    <property type="component" value="Chromosome I"/>
</dbReference>
<dbReference type="GO" id="GO:0005759">
    <property type="term" value="C:mitochondrial matrix"/>
    <property type="evidence" value="ECO:0000250"/>
    <property type="project" value="PomBase"/>
</dbReference>
<dbReference type="GO" id="GO:0005739">
    <property type="term" value="C:mitochondrion"/>
    <property type="evidence" value="ECO:0007005"/>
    <property type="project" value="PomBase"/>
</dbReference>
<dbReference type="GO" id="GO:0034553">
    <property type="term" value="P:mitochondrial respiratory chain complex II assembly"/>
    <property type="evidence" value="ECO:0000318"/>
    <property type="project" value="GO_Central"/>
</dbReference>
<dbReference type="CDD" id="cd20268">
    <property type="entry name" value="Complex1_LYR_SDHAF1_LYRM8"/>
    <property type="match status" value="1"/>
</dbReference>
<dbReference type="InterPro" id="IPR008011">
    <property type="entry name" value="Complex1_LYR_dom"/>
</dbReference>
<dbReference type="InterPro" id="IPR045295">
    <property type="entry name" value="Complex1_LYR_SDHAF1_LYRM8"/>
</dbReference>
<dbReference type="PANTHER" id="PTHR13675">
    <property type="entry name" value="LYR MOTIF-CONTAINING PROTEIN 2"/>
    <property type="match status" value="1"/>
</dbReference>
<dbReference type="PANTHER" id="PTHR13675:SF1">
    <property type="entry name" value="SUCCINATE DEHYDROGENASE ASSEMBLY FACTOR 1, MITOCHONDRIAL"/>
    <property type="match status" value="1"/>
</dbReference>
<dbReference type="Pfam" id="PF05347">
    <property type="entry name" value="Complex1_LYR"/>
    <property type="match status" value="1"/>
</dbReference>
<keyword id="KW-0143">Chaperone</keyword>
<keyword id="KW-0496">Mitochondrion</keyword>
<keyword id="KW-1185">Reference proteome</keyword>
<name>SDHF1_SCHPO</name>
<accession>Q9US02</accession>
<proteinExistence type="inferred from homology"/>
<evidence type="ECO:0000250" key="1">
    <source>
        <dbReference type="UniProtKB" id="Q3E785"/>
    </source>
</evidence>
<evidence type="ECO:0000305" key="2"/>
<organism>
    <name type="scientific">Schizosaccharomyces pombe (strain 972 / ATCC 24843)</name>
    <name type="common">Fission yeast</name>
    <dbReference type="NCBI Taxonomy" id="284812"/>
    <lineage>
        <taxon>Eukaryota</taxon>
        <taxon>Fungi</taxon>
        <taxon>Dikarya</taxon>
        <taxon>Ascomycota</taxon>
        <taxon>Taphrinomycotina</taxon>
        <taxon>Schizosaccharomycetes</taxon>
        <taxon>Schizosaccharomycetales</taxon>
        <taxon>Schizosaccharomycetaceae</taxon>
        <taxon>Schizosaccharomyces</taxon>
    </lineage>
</organism>
<gene>
    <name type="ORF">SPAC664.12c</name>
</gene>
<protein>
    <recommendedName>
        <fullName evidence="1">Succinate dehydrogenase assembly factor 1, mitochondrial</fullName>
        <shortName evidence="1">SDH assembly factor 1</shortName>
        <shortName evidence="1">SDHAF1</shortName>
    </recommendedName>
</protein>
<comment type="function">
    <text evidence="1">Plays an essential role in the assembly of succinate dehydrogenase (SDH), an enzyme complex (also referred to as respiratory complex II) that is a component of both the tricarboxylic acid (TCA) cycle and the mitochondrial electron transport chain, and which couples the oxidation of succinate to fumarate with the reduction of ubiquinone (coenzyme Q) to ubiquinol. Promotes maturation of the iron-sulfur protein subunit sdh2 of the SDH catalytic dimer, protecting it from the deleterious effects of oxidants. May act together with SDHAF3.</text>
</comment>
<comment type="subunit">
    <text evidence="1">Interacts with sdh2 within an sdh1-sdh2 subcomplex.</text>
</comment>
<comment type="subcellular location">
    <subcellularLocation>
        <location evidence="1">Mitochondrion matrix</location>
    </subcellularLocation>
</comment>
<comment type="similarity">
    <text evidence="2">Belongs to the complex I LYR family. SDHAF1 subfamily.</text>
</comment>
<feature type="chain" id="PRO_0000374046" description="Succinate dehydrogenase assembly factor 1, mitochondrial">
    <location>
        <begin position="1"/>
        <end position="79"/>
    </location>
</feature>